<feature type="chain" id="PRO_0000363100" description="Fructose-1,6-bisphosphatase class 3">
    <location>
        <begin position="1"/>
        <end position="653"/>
    </location>
</feature>
<comment type="catalytic activity">
    <reaction evidence="1">
        <text>beta-D-fructose 1,6-bisphosphate + H2O = beta-D-fructose 6-phosphate + phosphate</text>
        <dbReference type="Rhea" id="RHEA:11064"/>
        <dbReference type="ChEBI" id="CHEBI:15377"/>
        <dbReference type="ChEBI" id="CHEBI:32966"/>
        <dbReference type="ChEBI" id="CHEBI:43474"/>
        <dbReference type="ChEBI" id="CHEBI:57634"/>
        <dbReference type="EC" id="3.1.3.11"/>
    </reaction>
</comment>
<comment type="cofactor">
    <cofactor evidence="1">
        <name>Mn(2+)</name>
        <dbReference type="ChEBI" id="CHEBI:29035"/>
    </cofactor>
</comment>
<comment type="pathway">
    <text evidence="1">Carbohydrate biosynthesis; gluconeogenesis.</text>
</comment>
<comment type="similarity">
    <text evidence="1">Belongs to the FBPase class 3 family.</text>
</comment>
<keyword id="KW-0119">Carbohydrate metabolism</keyword>
<keyword id="KW-0378">Hydrolase</keyword>
<keyword id="KW-0464">Manganese</keyword>
<accession>Q92DI8</accession>
<reference key="1">
    <citation type="journal article" date="2001" name="Science">
        <title>Comparative genomics of Listeria species.</title>
        <authorList>
            <person name="Glaser P."/>
            <person name="Frangeul L."/>
            <person name="Buchrieser C."/>
            <person name="Rusniok C."/>
            <person name="Amend A."/>
            <person name="Baquero F."/>
            <person name="Berche P."/>
            <person name="Bloecker H."/>
            <person name="Brandt P."/>
            <person name="Chakraborty T."/>
            <person name="Charbit A."/>
            <person name="Chetouani F."/>
            <person name="Couve E."/>
            <person name="de Daruvar A."/>
            <person name="Dehoux P."/>
            <person name="Domann E."/>
            <person name="Dominguez-Bernal G."/>
            <person name="Duchaud E."/>
            <person name="Durant L."/>
            <person name="Dussurget O."/>
            <person name="Entian K.-D."/>
            <person name="Fsihi H."/>
            <person name="Garcia-del Portillo F."/>
            <person name="Garrido P."/>
            <person name="Gautier L."/>
            <person name="Goebel W."/>
            <person name="Gomez-Lopez N."/>
            <person name="Hain T."/>
            <person name="Hauf J."/>
            <person name="Jackson D."/>
            <person name="Jones L.-M."/>
            <person name="Kaerst U."/>
            <person name="Kreft J."/>
            <person name="Kuhn M."/>
            <person name="Kunst F."/>
            <person name="Kurapkat G."/>
            <person name="Madueno E."/>
            <person name="Maitournam A."/>
            <person name="Mata Vicente J."/>
            <person name="Ng E."/>
            <person name="Nedjari H."/>
            <person name="Nordsiek G."/>
            <person name="Novella S."/>
            <person name="de Pablos B."/>
            <person name="Perez-Diaz J.-C."/>
            <person name="Purcell R."/>
            <person name="Remmel B."/>
            <person name="Rose M."/>
            <person name="Schlueter T."/>
            <person name="Simoes N."/>
            <person name="Tierrez A."/>
            <person name="Vazquez-Boland J.-A."/>
            <person name="Voss H."/>
            <person name="Wehland J."/>
            <person name="Cossart P."/>
        </authorList>
    </citation>
    <scope>NUCLEOTIDE SEQUENCE [LARGE SCALE GENOMIC DNA]</scope>
    <source>
        <strain>ATCC BAA-680 / CLIP 11262</strain>
    </source>
</reference>
<dbReference type="EC" id="3.1.3.11" evidence="1"/>
<dbReference type="EMBL" id="AL596166">
    <property type="protein sequence ID" value="CAC96057.1"/>
    <property type="molecule type" value="Genomic_DNA"/>
</dbReference>
<dbReference type="PIR" id="AI1535">
    <property type="entry name" value="AI1535"/>
</dbReference>
<dbReference type="RefSeq" id="WP_010990630.1">
    <property type="nucleotide sequence ID" value="NC_003212.1"/>
</dbReference>
<dbReference type="STRING" id="272626.gene:17565152"/>
<dbReference type="GeneID" id="93234267"/>
<dbReference type="KEGG" id="lin:fbp"/>
<dbReference type="eggNOG" id="COG3855">
    <property type="taxonomic scope" value="Bacteria"/>
</dbReference>
<dbReference type="HOGENOM" id="CLU_028392_2_0_9"/>
<dbReference type="OrthoDB" id="9779903at2"/>
<dbReference type="UniPathway" id="UPA00138"/>
<dbReference type="Proteomes" id="UP000002513">
    <property type="component" value="Chromosome"/>
</dbReference>
<dbReference type="GO" id="GO:0042132">
    <property type="term" value="F:fructose 1,6-bisphosphate 1-phosphatase activity"/>
    <property type="evidence" value="ECO:0007669"/>
    <property type="project" value="UniProtKB-UniRule"/>
</dbReference>
<dbReference type="GO" id="GO:0006094">
    <property type="term" value="P:gluconeogenesis"/>
    <property type="evidence" value="ECO:0007669"/>
    <property type="project" value="UniProtKB-UniRule"/>
</dbReference>
<dbReference type="Gene3D" id="3.60.21.10">
    <property type="match status" value="1"/>
</dbReference>
<dbReference type="HAMAP" id="MF_01854">
    <property type="entry name" value="FBPase_class3"/>
    <property type="match status" value="1"/>
</dbReference>
<dbReference type="InterPro" id="IPR009164">
    <property type="entry name" value="FBPtase_class3"/>
</dbReference>
<dbReference type="InterPro" id="IPR029052">
    <property type="entry name" value="Metallo-depent_PP-like"/>
</dbReference>
<dbReference type="Pfam" id="PF06874">
    <property type="entry name" value="FBPase_2"/>
    <property type="match status" value="1"/>
</dbReference>
<dbReference type="PIRSF" id="PIRSF000906">
    <property type="entry name" value="FBPtase_Bacill"/>
    <property type="match status" value="1"/>
</dbReference>
<dbReference type="SUPFAM" id="SSF56300">
    <property type="entry name" value="Metallo-dependent phosphatases"/>
    <property type="match status" value="1"/>
</dbReference>
<evidence type="ECO:0000255" key="1">
    <source>
        <dbReference type="HAMAP-Rule" id="MF_01854"/>
    </source>
</evidence>
<gene>
    <name evidence="1" type="primary">fbp</name>
    <name type="ordered locus">lin0825</name>
</gene>
<organism>
    <name type="scientific">Listeria innocua serovar 6a (strain ATCC BAA-680 / CLIP 11262)</name>
    <dbReference type="NCBI Taxonomy" id="272626"/>
    <lineage>
        <taxon>Bacteria</taxon>
        <taxon>Bacillati</taxon>
        <taxon>Bacillota</taxon>
        <taxon>Bacilli</taxon>
        <taxon>Bacillales</taxon>
        <taxon>Listeriaceae</taxon>
        <taxon>Listeria</taxon>
    </lineage>
</organism>
<protein>
    <recommendedName>
        <fullName evidence="1">Fructose-1,6-bisphosphatase class 3</fullName>
        <shortName evidence="1">FBPase class 3</shortName>
        <ecNumber evidence="1">3.1.3.11</ecNumber>
    </recommendedName>
    <alternativeName>
        <fullName evidence="1">D-fructose-1,6-bisphosphate 1-phosphohydrolase class 3</fullName>
    </alternativeName>
</protein>
<proteinExistence type="inferred from homology"/>
<name>F16PC_LISIN</name>
<sequence length="653" mass="76069">MENIDMKYLHLLAKQYPTIAKTATEIINLEAIMNLPKGTEHFLSDVHGEYSAFEQVLRNGSGVVKRKIRDIFGDELDDAEINSLSTLIYYPEEKMDLIAEEMDDMHDWYRTTLFRLIELCQYVASKYTRSKVRKAMPEDFAYILEELLHENYNEEDKKMYYEEILQHIISLDRAAEFISALSRLIQQLVVDHLHIVGDVYDRGPYPDKIMDTLMNYHSLDFQWGNHDILWMGAASGSRVCAANVIRISARYLNLDILEDSYGISLRPLALFADEIYKNDPCTYFQPKNEDNLNYSKAEITQIARMHKAISIIQFKLEGEIINRRKEFDMNHRLLLQMIDYKKGTIHLKGKDYQLLDTHFPTIDPNDPYKLTKEEKELIEKITASFKNCRRLQKHVQFLYSKGSMFLTYNGNLLYHGCIPLYEDGTFMEMKLRGENFSGRELLEQFEILTREAYVRKPGTKEKKYACDIVWYLWTGAVSSLFGKSEMTTFERYFIAEKETHKEEKNPYYKLRNEETICKQILEEFGLDGECGHIINGHTPVKEGKGESPIKANTKMLVIDGGFAKAYHKETTLAGYTLLYNSYGLQLVSHQPFTTKEDAIKNETDILSTRQVIEMEINRKRVRDTDIGKNLNEQATDLKMLLEAYRNGSLHENS</sequence>